<evidence type="ECO:0000255" key="1">
    <source>
        <dbReference type="PROSITE-ProRule" id="PRU00227"/>
    </source>
</evidence>
<evidence type="ECO:0000269" key="2">
    <source>
    </source>
</evidence>
<keyword id="KW-0238">DNA-binding</keyword>
<keyword id="KW-0479">Metal-binding</keyword>
<keyword id="KW-0539">Nucleus</keyword>
<keyword id="KW-1185">Reference proteome</keyword>
<keyword id="KW-0804">Transcription</keyword>
<keyword id="KW-0805">Transcription regulation</keyword>
<keyword id="KW-0862">Zinc</keyword>
<name>GRT1_SCHPO</name>
<proteinExistence type="evidence at protein level"/>
<protein>
    <recommendedName>
        <fullName>Zinc finger protein grt1</fullName>
    </recommendedName>
</protein>
<sequence length="648" mass="74419">MVLSKRPVRISKACENCRKRKVKCSGGDVCFECQKYNENCVYRQFYRKIKRLKYNNDNSKIDNFSNEQMNIPEFISVRNLNDDSSSIEFFGPASNISFVNQLNHYLRKAERNGYDFLSEGQNDITPEEERKGLEKFGMKLMVLKDNANNFDFSLSNITTEKMNGLLIAYLETWHIPCPIFKAEDLFNLSVRTWKNPSASVHDKALLYLILSIGSAASYFDLQSNSSTLPLARGFFNLALRTVPHIFTELSLDAIRIVFFMSVSAGNLGDTALSYLYSGTAVRMSLAIGLHKCKNFSNDLSDKYQNIRLWVSVWQWEGYWSFCVGRPSCSRQDIPIPAVPNEAFSFSGYGEHGRFLINHEHMRLRVFFSSCCSKIQSEIYSTNRNLLSVLQTVEQISKEVDKEYFSSTNHQLIRSEIGEYCKTLDINSCREWFWIRIYYLYLKLMIFRPFLIFLAYVNISKTSAPDDIIEGLKRGSDQCVQEAIDISKFIVQLNRKVRMLQPIFFICTYLESACTVLLFYIASNSAKIQGQLATEIWAVLRDTCSFLQGSSGPYVGSVSTIAKDALESLNNILVSKKYQDNSVNNTYFDKVMQHVLVHSPAFDDSSDPKFETNRSETPTQYTLDDSANDELMIPDLQGFWEQTLDWINN</sequence>
<feature type="chain" id="PRO_0000114952" description="Zinc finger protein grt1">
    <location>
        <begin position="1"/>
        <end position="648"/>
    </location>
</feature>
<feature type="DNA-binding region" description="Zn(2)-C6 fungal-type" evidence="1">
    <location>
        <begin position="13"/>
        <end position="42"/>
    </location>
</feature>
<reference key="1">
    <citation type="journal article" date="2000" name="J. Cell Sci.">
        <title>High dosage expression of a zinc finger protein, Grt1, suppresses a mutant of fission yeast slp1(+), a homolog of CDC20/p55CDC/Fizzy.</title>
        <authorList>
            <person name="Yamada H.Y."/>
            <person name="Matsumoto S."/>
            <person name="Matsumoto T."/>
        </authorList>
    </citation>
    <scope>NUCLEOTIDE SEQUENCE [GENOMIC DNA]</scope>
    <scope>FUNCTION</scope>
    <scope>SUBUNIT</scope>
    <scope>SUBCELLULAR LOCATION</scope>
</reference>
<reference key="2">
    <citation type="journal article" date="2002" name="Nature">
        <title>The genome sequence of Schizosaccharomyces pombe.</title>
        <authorList>
            <person name="Wood V."/>
            <person name="Gwilliam R."/>
            <person name="Rajandream M.A."/>
            <person name="Lyne M.H."/>
            <person name="Lyne R."/>
            <person name="Stewart A."/>
            <person name="Sgouros J.G."/>
            <person name="Peat N."/>
            <person name="Hayles J."/>
            <person name="Baker S.G."/>
            <person name="Basham D."/>
            <person name="Bowman S."/>
            <person name="Brooks K."/>
            <person name="Brown D."/>
            <person name="Brown S."/>
            <person name="Chillingworth T."/>
            <person name="Churcher C.M."/>
            <person name="Collins M."/>
            <person name="Connor R."/>
            <person name="Cronin A."/>
            <person name="Davis P."/>
            <person name="Feltwell T."/>
            <person name="Fraser A."/>
            <person name="Gentles S."/>
            <person name="Goble A."/>
            <person name="Hamlin N."/>
            <person name="Harris D.E."/>
            <person name="Hidalgo J."/>
            <person name="Hodgson G."/>
            <person name="Holroyd S."/>
            <person name="Hornsby T."/>
            <person name="Howarth S."/>
            <person name="Huckle E.J."/>
            <person name="Hunt S."/>
            <person name="Jagels K."/>
            <person name="James K.D."/>
            <person name="Jones L."/>
            <person name="Jones M."/>
            <person name="Leather S."/>
            <person name="McDonald S."/>
            <person name="McLean J."/>
            <person name="Mooney P."/>
            <person name="Moule S."/>
            <person name="Mungall K.L."/>
            <person name="Murphy L.D."/>
            <person name="Niblett D."/>
            <person name="Odell C."/>
            <person name="Oliver K."/>
            <person name="O'Neil S."/>
            <person name="Pearson D."/>
            <person name="Quail M.A."/>
            <person name="Rabbinowitsch E."/>
            <person name="Rutherford K.M."/>
            <person name="Rutter S."/>
            <person name="Saunders D."/>
            <person name="Seeger K."/>
            <person name="Sharp S."/>
            <person name="Skelton J."/>
            <person name="Simmonds M.N."/>
            <person name="Squares R."/>
            <person name="Squares S."/>
            <person name="Stevens K."/>
            <person name="Taylor K."/>
            <person name="Taylor R.G."/>
            <person name="Tivey A."/>
            <person name="Walsh S.V."/>
            <person name="Warren T."/>
            <person name="Whitehead S."/>
            <person name="Woodward J.R."/>
            <person name="Volckaert G."/>
            <person name="Aert R."/>
            <person name="Robben J."/>
            <person name="Grymonprez B."/>
            <person name="Weltjens I."/>
            <person name="Vanstreels E."/>
            <person name="Rieger M."/>
            <person name="Schaefer M."/>
            <person name="Mueller-Auer S."/>
            <person name="Gabel C."/>
            <person name="Fuchs M."/>
            <person name="Duesterhoeft A."/>
            <person name="Fritzc C."/>
            <person name="Holzer E."/>
            <person name="Moestl D."/>
            <person name="Hilbert H."/>
            <person name="Borzym K."/>
            <person name="Langer I."/>
            <person name="Beck A."/>
            <person name="Lehrach H."/>
            <person name="Reinhardt R."/>
            <person name="Pohl T.M."/>
            <person name="Eger P."/>
            <person name="Zimmermann W."/>
            <person name="Wedler H."/>
            <person name="Wambutt R."/>
            <person name="Purnelle B."/>
            <person name="Goffeau A."/>
            <person name="Cadieu E."/>
            <person name="Dreano S."/>
            <person name="Gloux S."/>
            <person name="Lelaure V."/>
            <person name="Mottier S."/>
            <person name="Galibert F."/>
            <person name="Aves S.J."/>
            <person name="Xiang Z."/>
            <person name="Hunt C."/>
            <person name="Moore K."/>
            <person name="Hurst S.M."/>
            <person name="Lucas M."/>
            <person name="Rochet M."/>
            <person name="Gaillardin C."/>
            <person name="Tallada V.A."/>
            <person name="Garzon A."/>
            <person name="Thode G."/>
            <person name="Daga R.R."/>
            <person name="Cruzado L."/>
            <person name="Jimenez J."/>
            <person name="Sanchez M."/>
            <person name="del Rey F."/>
            <person name="Benito J."/>
            <person name="Dominguez A."/>
            <person name="Revuelta J.L."/>
            <person name="Moreno S."/>
            <person name="Armstrong J."/>
            <person name="Forsburg S.L."/>
            <person name="Cerutti L."/>
            <person name="Lowe T."/>
            <person name="McCombie W.R."/>
            <person name="Paulsen I."/>
            <person name="Potashkin J."/>
            <person name="Shpakovski G.V."/>
            <person name="Ussery D."/>
            <person name="Barrell B.G."/>
            <person name="Nurse P."/>
        </authorList>
    </citation>
    <scope>NUCLEOTIDE SEQUENCE [LARGE SCALE GENOMIC DNA]</scope>
    <source>
        <strain>972 / ATCC 24843</strain>
    </source>
</reference>
<accession>Q9C469</accession>
<dbReference type="EMBL" id="AF236387">
    <property type="protein sequence ID" value="AAK11149.1"/>
    <property type="molecule type" value="Genomic_DNA"/>
</dbReference>
<dbReference type="EMBL" id="CU329671">
    <property type="protein sequence ID" value="CAD27910.1"/>
    <property type="molecule type" value="Genomic_DNA"/>
</dbReference>
<dbReference type="RefSeq" id="NP_001018765.1">
    <property type="nucleotide sequence ID" value="NM_001020940.2"/>
</dbReference>
<dbReference type="SMR" id="Q9C469"/>
<dbReference type="BioGRID" id="280256">
    <property type="interactions" value="1"/>
</dbReference>
<dbReference type="STRING" id="284812.Q9C469"/>
<dbReference type="PaxDb" id="4896-SPBPB8B6.04c.1"/>
<dbReference type="EnsemblFungi" id="SPBPB8B6.04c.1">
    <property type="protein sequence ID" value="SPBPB8B6.04c.1:pep"/>
    <property type="gene ID" value="SPBPB8B6.04c"/>
</dbReference>
<dbReference type="GeneID" id="3361180"/>
<dbReference type="KEGG" id="spo:3361180"/>
<dbReference type="PomBase" id="SPBPB8B6.04c">
    <property type="gene designation" value="grt1"/>
</dbReference>
<dbReference type="VEuPathDB" id="FungiDB:SPBPB8B6.04c"/>
<dbReference type="eggNOG" id="ENOG502RIW1">
    <property type="taxonomic scope" value="Eukaryota"/>
</dbReference>
<dbReference type="HOGENOM" id="CLU_466213_0_0_1"/>
<dbReference type="InParanoid" id="Q9C469"/>
<dbReference type="OMA" id="WIRIYYL"/>
<dbReference type="PhylomeDB" id="Q9C469"/>
<dbReference type="PRO" id="PR:Q9C469"/>
<dbReference type="Proteomes" id="UP000002485">
    <property type="component" value="Chromosome II"/>
</dbReference>
<dbReference type="GO" id="GO:0005634">
    <property type="term" value="C:nucleus"/>
    <property type="evidence" value="ECO:0007005"/>
    <property type="project" value="PomBase"/>
</dbReference>
<dbReference type="GO" id="GO:0000981">
    <property type="term" value="F:DNA-binding transcription factor activity, RNA polymerase II-specific"/>
    <property type="evidence" value="ECO:0000255"/>
    <property type="project" value="PomBase"/>
</dbReference>
<dbReference type="GO" id="GO:0000978">
    <property type="term" value="F:RNA polymerase II cis-regulatory region sequence-specific DNA binding"/>
    <property type="evidence" value="ECO:0000255"/>
    <property type="project" value="PomBase"/>
</dbReference>
<dbReference type="GO" id="GO:0008270">
    <property type="term" value="F:zinc ion binding"/>
    <property type="evidence" value="ECO:0007669"/>
    <property type="project" value="InterPro"/>
</dbReference>
<dbReference type="GO" id="GO:0006351">
    <property type="term" value="P:DNA-templated transcription"/>
    <property type="evidence" value="ECO:0007669"/>
    <property type="project" value="InterPro"/>
</dbReference>
<dbReference type="GO" id="GO:0006357">
    <property type="term" value="P:regulation of transcription by RNA polymerase II"/>
    <property type="evidence" value="ECO:0000255"/>
    <property type="project" value="PomBase"/>
</dbReference>
<dbReference type="CDD" id="cd12148">
    <property type="entry name" value="fungal_TF_MHR"/>
    <property type="match status" value="1"/>
</dbReference>
<dbReference type="CDD" id="cd00067">
    <property type="entry name" value="GAL4"/>
    <property type="match status" value="1"/>
</dbReference>
<dbReference type="Gene3D" id="4.10.240.10">
    <property type="entry name" value="Zn(2)-C6 fungal-type DNA-binding domain"/>
    <property type="match status" value="1"/>
</dbReference>
<dbReference type="InterPro" id="IPR051127">
    <property type="entry name" value="Fungal_SecMet_Regulators"/>
</dbReference>
<dbReference type="InterPro" id="IPR007219">
    <property type="entry name" value="Transcription_factor_dom_fun"/>
</dbReference>
<dbReference type="InterPro" id="IPR036864">
    <property type="entry name" value="Zn2-C6_fun-type_DNA-bd_sf"/>
</dbReference>
<dbReference type="InterPro" id="IPR001138">
    <property type="entry name" value="Zn2Cys6_DnaBD"/>
</dbReference>
<dbReference type="PANTHER" id="PTHR47424">
    <property type="entry name" value="REGULATORY PROTEIN GAL4"/>
    <property type="match status" value="1"/>
</dbReference>
<dbReference type="PANTHER" id="PTHR47424:SF14">
    <property type="entry name" value="ZINC FINGER PROTEIN GRT1"/>
    <property type="match status" value="1"/>
</dbReference>
<dbReference type="Pfam" id="PF04082">
    <property type="entry name" value="Fungal_trans"/>
    <property type="match status" value="1"/>
</dbReference>
<dbReference type="Pfam" id="PF00172">
    <property type="entry name" value="Zn_clus"/>
    <property type="match status" value="1"/>
</dbReference>
<dbReference type="SMART" id="SM00906">
    <property type="entry name" value="Fungal_trans"/>
    <property type="match status" value="1"/>
</dbReference>
<dbReference type="SMART" id="SM00066">
    <property type="entry name" value="GAL4"/>
    <property type="match status" value="1"/>
</dbReference>
<dbReference type="SUPFAM" id="SSF57701">
    <property type="entry name" value="Zn2/Cys6 DNA-binding domain"/>
    <property type="match status" value="1"/>
</dbReference>
<dbReference type="PROSITE" id="PS00463">
    <property type="entry name" value="ZN2_CY6_FUNGAL_1"/>
    <property type="match status" value="1"/>
</dbReference>
<dbReference type="PROSITE" id="PS50048">
    <property type="entry name" value="ZN2_CY6_FUNGAL_2"/>
    <property type="match status" value="1"/>
</dbReference>
<gene>
    <name type="primary">grt1</name>
    <name type="ORF">SPBPB8B6.04c</name>
</gene>
<comment type="function">
    <text evidence="2">May be involved in the facilitation of anaphase progression in mitosis.</text>
</comment>
<comment type="subunit">
    <text evidence="2">Monomer.</text>
</comment>
<comment type="subcellular location">
    <subcellularLocation>
        <location evidence="1 2">Nucleus</location>
    </subcellularLocation>
</comment>
<organism>
    <name type="scientific">Schizosaccharomyces pombe (strain 972 / ATCC 24843)</name>
    <name type="common">Fission yeast</name>
    <dbReference type="NCBI Taxonomy" id="284812"/>
    <lineage>
        <taxon>Eukaryota</taxon>
        <taxon>Fungi</taxon>
        <taxon>Dikarya</taxon>
        <taxon>Ascomycota</taxon>
        <taxon>Taphrinomycotina</taxon>
        <taxon>Schizosaccharomycetes</taxon>
        <taxon>Schizosaccharomycetales</taxon>
        <taxon>Schizosaccharomycetaceae</taxon>
        <taxon>Schizosaccharomyces</taxon>
    </lineage>
</organism>